<protein>
    <recommendedName>
        <fullName evidence="1">ATP synthase subunit a, chloroplastic</fullName>
    </recommendedName>
    <alternativeName>
        <fullName evidence="1">ATP synthase F0 sector subunit a</fullName>
    </alternativeName>
    <alternativeName>
        <fullName evidence="1">F-ATPase subunit IV</fullName>
    </alternativeName>
</protein>
<gene>
    <name evidence="1" type="primary">atpI</name>
</gene>
<sequence>MNVLSCSINTLIKEGLYEISGVEVGQHFYWQIGGFQVHAQVLITSWVVIAILLGSAVLAIRNPQTIPTDGQNFFEFVLEFIRDVSKTQIGEEYGPWVPFIGTLFLFIFVSNWSGALLPWKIIQLPQGELAAPTNDINTTVALALLTSVAYFYAGLSKKGLGYFSKYIQPTPILLPINILEDFTKPLSLSFRLFGNILADELVVVVLVSLVPLVVPIPVMFLGLFTSGIQALIFATLAAAYIGESMEGHH</sequence>
<evidence type="ECO:0000255" key="1">
    <source>
        <dbReference type="HAMAP-Rule" id="MF_01393"/>
    </source>
</evidence>
<name>ATPI_CRUWA</name>
<comment type="function">
    <text evidence="1">Key component of the proton channel; it plays a direct role in the translocation of protons across the membrane.</text>
</comment>
<comment type="subunit">
    <text evidence="1">F-type ATPases have 2 components, CF(1) - the catalytic core - and CF(0) - the membrane proton channel. CF(1) has five subunits: alpha(3), beta(3), gamma(1), delta(1), epsilon(1). CF(0) has four main subunits: a, b, b' and c.</text>
</comment>
<comment type="subcellular location">
    <subcellularLocation>
        <location evidence="1">Plastid</location>
        <location evidence="1">Chloroplast thylakoid membrane</location>
        <topology evidence="1">Multi-pass membrane protein</topology>
    </subcellularLocation>
</comment>
<comment type="similarity">
    <text evidence="1">Belongs to the ATPase A chain family.</text>
</comment>
<dbReference type="EMBL" id="AP009372">
    <property type="protein sequence ID" value="BAF50274.1"/>
    <property type="molecule type" value="Genomic_DNA"/>
</dbReference>
<dbReference type="RefSeq" id="YP_001123450.1">
    <property type="nucleotide sequence ID" value="NC_009271.1"/>
</dbReference>
<dbReference type="SMR" id="A4QKR9"/>
<dbReference type="GeneID" id="4962690"/>
<dbReference type="GO" id="GO:0009535">
    <property type="term" value="C:chloroplast thylakoid membrane"/>
    <property type="evidence" value="ECO:0007669"/>
    <property type="project" value="UniProtKB-SubCell"/>
</dbReference>
<dbReference type="GO" id="GO:0005886">
    <property type="term" value="C:plasma membrane"/>
    <property type="evidence" value="ECO:0007669"/>
    <property type="project" value="UniProtKB-UniRule"/>
</dbReference>
<dbReference type="GO" id="GO:0045259">
    <property type="term" value="C:proton-transporting ATP synthase complex"/>
    <property type="evidence" value="ECO:0007669"/>
    <property type="project" value="UniProtKB-KW"/>
</dbReference>
<dbReference type="GO" id="GO:0046933">
    <property type="term" value="F:proton-transporting ATP synthase activity, rotational mechanism"/>
    <property type="evidence" value="ECO:0007669"/>
    <property type="project" value="UniProtKB-UniRule"/>
</dbReference>
<dbReference type="CDD" id="cd00310">
    <property type="entry name" value="ATP-synt_Fo_a_6"/>
    <property type="match status" value="1"/>
</dbReference>
<dbReference type="FunFam" id="1.20.120.220:FF:000001">
    <property type="entry name" value="ATP synthase subunit a, chloroplastic"/>
    <property type="match status" value="1"/>
</dbReference>
<dbReference type="Gene3D" id="1.20.120.220">
    <property type="entry name" value="ATP synthase, F0 complex, subunit A"/>
    <property type="match status" value="1"/>
</dbReference>
<dbReference type="HAMAP" id="MF_01393">
    <property type="entry name" value="ATP_synth_a_bact"/>
    <property type="match status" value="1"/>
</dbReference>
<dbReference type="InterPro" id="IPR045082">
    <property type="entry name" value="ATP_syn_F0_a_bact/chloroplast"/>
</dbReference>
<dbReference type="InterPro" id="IPR000568">
    <property type="entry name" value="ATP_synth_F0_asu"/>
</dbReference>
<dbReference type="InterPro" id="IPR023011">
    <property type="entry name" value="ATP_synth_F0_asu_AS"/>
</dbReference>
<dbReference type="InterPro" id="IPR035908">
    <property type="entry name" value="F0_ATP_A_sf"/>
</dbReference>
<dbReference type="NCBIfam" id="TIGR01131">
    <property type="entry name" value="ATP_synt_6_or_A"/>
    <property type="match status" value="1"/>
</dbReference>
<dbReference type="PANTHER" id="PTHR42823">
    <property type="entry name" value="ATP SYNTHASE SUBUNIT A, CHLOROPLASTIC"/>
    <property type="match status" value="1"/>
</dbReference>
<dbReference type="PANTHER" id="PTHR42823:SF3">
    <property type="entry name" value="ATP SYNTHASE SUBUNIT A, CHLOROPLASTIC"/>
    <property type="match status" value="1"/>
</dbReference>
<dbReference type="Pfam" id="PF00119">
    <property type="entry name" value="ATP-synt_A"/>
    <property type="match status" value="1"/>
</dbReference>
<dbReference type="PRINTS" id="PR00123">
    <property type="entry name" value="ATPASEA"/>
</dbReference>
<dbReference type="SUPFAM" id="SSF81336">
    <property type="entry name" value="F1F0 ATP synthase subunit A"/>
    <property type="match status" value="1"/>
</dbReference>
<dbReference type="PROSITE" id="PS00449">
    <property type="entry name" value="ATPASE_A"/>
    <property type="match status" value="1"/>
</dbReference>
<keyword id="KW-0066">ATP synthesis</keyword>
<keyword id="KW-0138">CF(0)</keyword>
<keyword id="KW-0150">Chloroplast</keyword>
<keyword id="KW-0375">Hydrogen ion transport</keyword>
<keyword id="KW-0406">Ion transport</keyword>
<keyword id="KW-0472">Membrane</keyword>
<keyword id="KW-0934">Plastid</keyword>
<keyword id="KW-0793">Thylakoid</keyword>
<keyword id="KW-0812">Transmembrane</keyword>
<keyword id="KW-1133">Transmembrane helix</keyword>
<keyword id="KW-0813">Transport</keyword>
<geneLocation type="chloroplast"/>
<reference key="1">
    <citation type="submission" date="2007-03" db="EMBL/GenBank/DDBJ databases">
        <title>Sequencing analysis of Crucihimalaya wallichii chloroplast DNA.</title>
        <authorList>
            <person name="Hosouchi T."/>
            <person name="Tsuruoka H."/>
            <person name="Kotani H."/>
        </authorList>
    </citation>
    <scope>NUCLEOTIDE SEQUENCE [LARGE SCALE GENOMIC DNA]</scope>
</reference>
<organism>
    <name type="scientific">Crucihimalaya wallichii</name>
    <name type="common">Rock-cress</name>
    <name type="synonym">Arabidopsis campestris</name>
    <dbReference type="NCBI Taxonomy" id="78192"/>
    <lineage>
        <taxon>Eukaryota</taxon>
        <taxon>Viridiplantae</taxon>
        <taxon>Streptophyta</taxon>
        <taxon>Embryophyta</taxon>
        <taxon>Tracheophyta</taxon>
        <taxon>Spermatophyta</taxon>
        <taxon>Magnoliopsida</taxon>
        <taxon>eudicotyledons</taxon>
        <taxon>Gunneridae</taxon>
        <taxon>Pentapetalae</taxon>
        <taxon>rosids</taxon>
        <taxon>malvids</taxon>
        <taxon>Brassicales</taxon>
        <taxon>Brassicaceae</taxon>
        <taxon>Crucihimalayeae</taxon>
        <taxon>Crucihimalaya</taxon>
    </lineage>
</organism>
<proteinExistence type="inferred from homology"/>
<accession>A4QKR9</accession>
<feature type="chain" id="PRO_0000362545" description="ATP synthase subunit a, chloroplastic">
    <location>
        <begin position="1"/>
        <end position="249"/>
    </location>
</feature>
<feature type="transmembrane region" description="Helical" evidence="1">
    <location>
        <begin position="40"/>
        <end position="60"/>
    </location>
</feature>
<feature type="transmembrane region" description="Helical" evidence="1">
    <location>
        <begin position="97"/>
        <end position="117"/>
    </location>
</feature>
<feature type="transmembrane region" description="Helical" evidence="1">
    <location>
        <begin position="136"/>
        <end position="156"/>
    </location>
</feature>
<feature type="transmembrane region" description="Helical" evidence="1">
    <location>
        <begin position="201"/>
        <end position="221"/>
    </location>
</feature>
<feature type="transmembrane region" description="Helical" evidence="1">
    <location>
        <begin position="222"/>
        <end position="242"/>
    </location>
</feature>